<name>TEG1_EHV1V</name>
<evidence type="ECO:0000250" key="1"/>
<evidence type="ECO:0000250" key="2">
    <source>
        <dbReference type="UniProtKB" id="P10230"/>
    </source>
</evidence>
<evidence type="ECO:0000256" key="3">
    <source>
        <dbReference type="SAM" id="MobiDB-lite"/>
    </source>
</evidence>
<evidence type="ECO:0000305" key="4"/>
<sequence>MDGGGSSSWTHVSKNLIERRAVKGCLLPTPSDVMDAAVMALKDVTENIVGQQLFSVDRTNALSVIHTNEVPESIIATAIARDTSRDYLREYEGAAKCNLAATDLSHDEMWEVVIKRYWRYLRESSGAEVVDRGAVGQATQSVLSVLLLQSTFGKKRLSKNPFKHKGPNVGYKSNLEDLRSAFTKIEKYMYYMRPNDPMTKSEDTELRLHELLAYVTTCYRWLLWFMDLTDAKVLRNIDKGPVITHGPRESRPPDELVRRHLKSGPAISAGTGVALTLSTATADALIVLLRMSVSWTSHSWKSNTHGVTGAIVAAVELVTLIHHHLQYIINTVFAGYVCWLDGGVENSYLNSALRSQGRFDHFVGKLVPIMATLSWANMEKGTVMWFKYALAKSIVCHGSPTQHYLTVLESIASKRTGACPPQGSTFGRNPSGFPGQFCCPPQGPLPAPPNSKTRGTFRRCRPGSLRSSRQLPTSPPSNIVSPRTNPAIEGSTAAKNVQGAETIQVRSSGEFNDCIWYINGAYPHQRSDSSSSDNSTCSSTETQYITLPSTPSPTGDVVYTNPLLGPDEEVDASPQPVDPMSDYSAPKNPDYMRPRSTLVEEVWQLRDSDYTPYMRPSRPSRAGRSRVRVEDQTLEPSSPAGCNPPANSPENDSDDAAVDSPPISPEVVYGTFRPRAKCVYDQYGLTALAALSASRAKARRTRPGPTQPDVCRERDEESAEPRHDGFIRRTMSTTGPPRKHPDQTERVSSL</sequence>
<organism>
    <name type="scientific">Equine herpesvirus 1 (strain V592)</name>
    <name type="common">EHV-1</name>
    <name type="synonym">Equine abortion virus</name>
    <dbReference type="NCBI Taxonomy" id="310273"/>
    <lineage>
        <taxon>Viruses</taxon>
        <taxon>Duplodnaviria</taxon>
        <taxon>Heunggongvirae</taxon>
        <taxon>Peploviricota</taxon>
        <taxon>Herviviricetes</taxon>
        <taxon>Herpesvirales</taxon>
        <taxon>Orthoherpesviridae</taxon>
        <taxon>Alphaherpesvirinae</taxon>
        <taxon>Varicellovirus</taxon>
        <taxon>Varicellovirus equidalpha1</taxon>
        <taxon>Equid alphaherpesvirus 1</taxon>
    </lineage>
</organism>
<accession>Q6S6Q7</accession>
<gene>
    <name type="ORF">14</name>
</gene>
<proteinExistence type="inferred from homology"/>
<feature type="chain" id="PRO_0000115796" description="Tegument protein UL46 homolog">
    <location>
        <begin position="1"/>
        <end position="750"/>
    </location>
</feature>
<feature type="region of interest" description="Disordered" evidence="3">
    <location>
        <begin position="437"/>
        <end position="484"/>
    </location>
</feature>
<feature type="region of interest" description="Disordered" evidence="3">
    <location>
        <begin position="525"/>
        <end position="593"/>
    </location>
</feature>
<feature type="region of interest" description="Disordered" evidence="3">
    <location>
        <begin position="610"/>
        <end position="669"/>
    </location>
</feature>
<feature type="region of interest" description="Disordered" evidence="3">
    <location>
        <begin position="692"/>
        <end position="750"/>
    </location>
</feature>
<feature type="compositionally biased region" description="Polar residues" evidence="3">
    <location>
        <begin position="465"/>
        <end position="484"/>
    </location>
</feature>
<feature type="compositionally biased region" description="Low complexity" evidence="3">
    <location>
        <begin position="528"/>
        <end position="540"/>
    </location>
</feature>
<feature type="compositionally biased region" description="Polar residues" evidence="3">
    <location>
        <begin position="541"/>
        <end position="553"/>
    </location>
</feature>
<feature type="compositionally biased region" description="Basic and acidic residues" evidence="3">
    <location>
        <begin position="710"/>
        <end position="727"/>
    </location>
</feature>
<feature type="compositionally biased region" description="Basic and acidic residues" evidence="3">
    <location>
        <begin position="739"/>
        <end position="750"/>
    </location>
</feature>
<dbReference type="EMBL" id="AY464052">
    <property type="protein sequence ID" value="AAS45898.1"/>
    <property type="molecule type" value="Genomic_DNA"/>
</dbReference>
<dbReference type="Proteomes" id="UP000008296">
    <property type="component" value="Segment"/>
</dbReference>
<dbReference type="GO" id="GO:0020002">
    <property type="term" value="C:host cell plasma membrane"/>
    <property type="evidence" value="ECO:0007669"/>
    <property type="project" value="UniProtKB-SubCell"/>
</dbReference>
<dbReference type="GO" id="GO:0016020">
    <property type="term" value="C:membrane"/>
    <property type="evidence" value="ECO:0007669"/>
    <property type="project" value="UniProtKB-KW"/>
</dbReference>
<dbReference type="GO" id="GO:0019033">
    <property type="term" value="C:viral tegument"/>
    <property type="evidence" value="ECO:0007669"/>
    <property type="project" value="UniProtKB-SubCell"/>
</dbReference>
<dbReference type="GO" id="GO:0006355">
    <property type="term" value="P:regulation of DNA-templated transcription"/>
    <property type="evidence" value="ECO:0007669"/>
    <property type="project" value="InterPro"/>
</dbReference>
<dbReference type="InterPro" id="IPR005051">
    <property type="entry name" value="Herpes_UL46"/>
</dbReference>
<dbReference type="Pfam" id="PF03387">
    <property type="entry name" value="Herpes_UL46"/>
    <property type="match status" value="1"/>
</dbReference>
<protein>
    <recommendedName>
        <fullName>Tegument protein UL46 homolog</fullName>
    </recommendedName>
    <alternativeName>
        <fullName>Tegument protein VP11/12 homolog</fullName>
    </alternativeName>
</protein>
<keyword id="KW-0010">Activator</keyword>
<keyword id="KW-1032">Host cell membrane</keyword>
<keyword id="KW-1043">Host membrane</keyword>
<keyword id="KW-0472">Membrane</keyword>
<keyword id="KW-0804">Transcription</keyword>
<keyword id="KW-0805">Transcription regulation</keyword>
<keyword id="KW-0946">Virion</keyword>
<keyword id="KW-0920">Virion tegument</keyword>
<reference key="1">
    <citation type="submission" date="2003-11" db="EMBL/GenBank/DDBJ databases">
        <authorList>
            <person name="Davis-Poynter N.J."/>
            <person name="Nugent J."/>
            <person name="Birch-Machin I."/>
            <person name="Allen G.P."/>
        </authorList>
    </citation>
    <scope>NUCLEOTIDE SEQUENCE [LARGE SCALE GENOMIC DNA]</scope>
</reference>
<organismHost>
    <name type="scientific">Equus caballus</name>
    <name type="common">Horse</name>
    <dbReference type="NCBI Taxonomy" id="9796"/>
</organismHost>
<comment type="function">
    <text evidence="1">Modulates alpha trans-inducing factor-dependent activation of alpha genes.</text>
</comment>
<comment type="subcellular location">
    <subcellularLocation>
        <location evidence="2">Virion tegument</location>
    </subcellularLocation>
    <subcellularLocation>
        <location evidence="2">Host cell membrane</location>
        <topology evidence="2">Peripheral membrane protein</topology>
    </subcellularLocation>
</comment>
<comment type="similarity">
    <text evidence="4">Belongs to the herpesviridae HHV-1 VP11/12 protein family.</text>
</comment>